<accession>Q2SZI3</accession>
<comment type="function">
    <text evidence="1">Cell wall formation. Catalyzes the transfer of a GlcNAc subunit on undecaprenyl-pyrophosphoryl-MurNAc-pentapeptide (lipid intermediate I) to form undecaprenyl-pyrophosphoryl-MurNAc-(pentapeptide)GlcNAc (lipid intermediate II).</text>
</comment>
<comment type="catalytic activity">
    <reaction evidence="1">
        <text>di-trans,octa-cis-undecaprenyl diphospho-N-acetyl-alpha-D-muramoyl-L-alanyl-D-glutamyl-meso-2,6-diaminopimeloyl-D-alanyl-D-alanine + UDP-N-acetyl-alpha-D-glucosamine = di-trans,octa-cis-undecaprenyl diphospho-[N-acetyl-alpha-D-glucosaminyl-(1-&gt;4)]-N-acetyl-alpha-D-muramoyl-L-alanyl-D-glutamyl-meso-2,6-diaminopimeloyl-D-alanyl-D-alanine + UDP + H(+)</text>
        <dbReference type="Rhea" id="RHEA:31227"/>
        <dbReference type="ChEBI" id="CHEBI:15378"/>
        <dbReference type="ChEBI" id="CHEBI:57705"/>
        <dbReference type="ChEBI" id="CHEBI:58223"/>
        <dbReference type="ChEBI" id="CHEBI:61387"/>
        <dbReference type="ChEBI" id="CHEBI:61388"/>
        <dbReference type="EC" id="2.4.1.227"/>
    </reaction>
</comment>
<comment type="pathway">
    <text evidence="1">Cell wall biogenesis; peptidoglycan biosynthesis.</text>
</comment>
<comment type="subcellular location">
    <subcellularLocation>
        <location evidence="1">Cell inner membrane</location>
        <topology evidence="1">Peripheral membrane protein</topology>
        <orientation evidence="1">Cytoplasmic side</orientation>
    </subcellularLocation>
</comment>
<comment type="similarity">
    <text evidence="1">Belongs to the glycosyltransferase 28 family. MurG subfamily.</text>
</comment>
<sequence length="367" mass="38586">MTSTPRTLMVMAGGTGGHVFPGLAVAHRMQAQGWRVVWLGNPAGMEATLVPKHGIPMEYVRFGGLRGKGLATKLALPFNLLRACAQSLRALRRVKPDVVLGMGGYITFPAGLVTVLTGRPLVLHEQNSIAGLTNKVLAKLAKRVLVAFPGALPNAEWTGNPIRAELARTEPPQARYAARSGKLKLLVVGGSLGAAALNEVVPRALALLAPSERPQVVHQAGAKHIDVLKENYEAAGLACGSDVELVPFIDDMASAYASADLVICRSGAMTVAEIAAVGVAALFVPFPHAVDDHQTTNAEFLAEQGAAVLVQQRDLSAELLADWLRGQSRESLAAMAERSRSLAKPDATDEVARVCAAVAGANLEGKQ</sequence>
<dbReference type="EC" id="2.4.1.227" evidence="1"/>
<dbReference type="EMBL" id="CP000086">
    <property type="protein sequence ID" value="ABC37066.1"/>
    <property type="molecule type" value="Genomic_DNA"/>
</dbReference>
<dbReference type="RefSeq" id="WP_009888781.1">
    <property type="nucleotide sequence ID" value="NZ_CP008785.1"/>
</dbReference>
<dbReference type="SMR" id="Q2SZI3"/>
<dbReference type="CAZy" id="GT28">
    <property type="family name" value="Glycosyltransferase Family 28"/>
</dbReference>
<dbReference type="GeneID" id="45120870"/>
<dbReference type="KEGG" id="bte:BTH_I1118"/>
<dbReference type="HOGENOM" id="CLU_037404_2_0_4"/>
<dbReference type="UniPathway" id="UPA00219"/>
<dbReference type="Proteomes" id="UP000001930">
    <property type="component" value="Chromosome I"/>
</dbReference>
<dbReference type="GO" id="GO:0005886">
    <property type="term" value="C:plasma membrane"/>
    <property type="evidence" value="ECO:0007669"/>
    <property type="project" value="UniProtKB-SubCell"/>
</dbReference>
<dbReference type="GO" id="GO:0051991">
    <property type="term" value="F:UDP-N-acetyl-D-glucosamine:N-acetylmuramoyl-L-alanyl-D-glutamyl-meso-2,6-diaminopimelyl-D-alanyl-D-alanine-diphosphoundecaprenol 4-beta-N-acetylglucosaminlytransferase activity"/>
    <property type="evidence" value="ECO:0007669"/>
    <property type="project" value="RHEA"/>
</dbReference>
<dbReference type="GO" id="GO:0050511">
    <property type="term" value="F:undecaprenyldiphospho-muramoylpentapeptide beta-N-acetylglucosaminyltransferase activity"/>
    <property type="evidence" value="ECO:0007669"/>
    <property type="project" value="UniProtKB-UniRule"/>
</dbReference>
<dbReference type="GO" id="GO:0005975">
    <property type="term" value="P:carbohydrate metabolic process"/>
    <property type="evidence" value="ECO:0007669"/>
    <property type="project" value="InterPro"/>
</dbReference>
<dbReference type="GO" id="GO:0051301">
    <property type="term" value="P:cell division"/>
    <property type="evidence" value="ECO:0007669"/>
    <property type="project" value="UniProtKB-KW"/>
</dbReference>
<dbReference type="GO" id="GO:0071555">
    <property type="term" value="P:cell wall organization"/>
    <property type="evidence" value="ECO:0007669"/>
    <property type="project" value="UniProtKB-KW"/>
</dbReference>
<dbReference type="GO" id="GO:0030259">
    <property type="term" value="P:lipid glycosylation"/>
    <property type="evidence" value="ECO:0007669"/>
    <property type="project" value="UniProtKB-UniRule"/>
</dbReference>
<dbReference type="GO" id="GO:0009252">
    <property type="term" value="P:peptidoglycan biosynthetic process"/>
    <property type="evidence" value="ECO:0007669"/>
    <property type="project" value="UniProtKB-UniRule"/>
</dbReference>
<dbReference type="GO" id="GO:0008360">
    <property type="term" value="P:regulation of cell shape"/>
    <property type="evidence" value="ECO:0007669"/>
    <property type="project" value="UniProtKB-KW"/>
</dbReference>
<dbReference type="CDD" id="cd03785">
    <property type="entry name" value="GT28_MurG"/>
    <property type="match status" value="1"/>
</dbReference>
<dbReference type="Gene3D" id="3.40.50.2000">
    <property type="entry name" value="Glycogen Phosphorylase B"/>
    <property type="match status" value="2"/>
</dbReference>
<dbReference type="HAMAP" id="MF_00033">
    <property type="entry name" value="MurG"/>
    <property type="match status" value="1"/>
</dbReference>
<dbReference type="InterPro" id="IPR006009">
    <property type="entry name" value="GlcNAc_MurG"/>
</dbReference>
<dbReference type="InterPro" id="IPR007235">
    <property type="entry name" value="Glyco_trans_28_C"/>
</dbReference>
<dbReference type="InterPro" id="IPR004276">
    <property type="entry name" value="GlycoTrans_28_N"/>
</dbReference>
<dbReference type="NCBIfam" id="TIGR01133">
    <property type="entry name" value="murG"/>
    <property type="match status" value="1"/>
</dbReference>
<dbReference type="PANTHER" id="PTHR21015:SF22">
    <property type="entry name" value="GLYCOSYLTRANSFERASE"/>
    <property type="match status" value="1"/>
</dbReference>
<dbReference type="PANTHER" id="PTHR21015">
    <property type="entry name" value="UDP-N-ACETYLGLUCOSAMINE--N-ACETYLMURAMYL-(PENTAPEPTIDE) PYROPHOSPHORYL-UNDECAPRENOL N-ACETYLGLUCOSAMINE TRANSFERASE 1"/>
    <property type="match status" value="1"/>
</dbReference>
<dbReference type="Pfam" id="PF04101">
    <property type="entry name" value="Glyco_tran_28_C"/>
    <property type="match status" value="1"/>
</dbReference>
<dbReference type="Pfam" id="PF03033">
    <property type="entry name" value="Glyco_transf_28"/>
    <property type="match status" value="1"/>
</dbReference>
<dbReference type="SUPFAM" id="SSF53756">
    <property type="entry name" value="UDP-Glycosyltransferase/glycogen phosphorylase"/>
    <property type="match status" value="1"/>
</dbReference>
<gene>
    <name evidence="1" type="primary">murG</name>
    <name type="ordered locus">BTH_I1118</name>
</gene>
<name>MURG_BURTA</name>
<protein>
    <recommendedName>
        <fullName evidence="1">UDP-N-acetylglucosamine--N-acetylmuramyl-(pentapeptide) pyrophosphoryl-undecaprenol N-acetylglucosamine transferase</fullName>
        <ecNumber evidence="1">2.4.1.227</ecNumber>
    </recommendedName>
    <alternativeName>
        <fullName evidence="1">Undecaprenyl-PP-MurNAc-pentapeptide-UDPGlcNAc GlcNAc transferase</fullName>
    </alternativeName>
</protein>
<organism>
    <name type="scientific">Burkholderia thailandensis (strain ATCC 700388 / DSM 13276 / CCUG 48851 / CIP 106301 / E264)</name>
    <dbReference type="NCBI Taxonomy" id="271848"/>
    <lineage>
        <taxon>Bacteria</taxon>
        <taxon>Pseudomonadati</taxon>
        <taxon>Pseudomonadota</taxon>
        <taxon>Betaproteobacteria</taxon>
        <taxon>Burkholderiales</taxon>
        <taxon>Burkholderiaceae</taxon>
        <taxon>Burkholderia</taxon>
        <taxon>pseudomallei group</taxon>
    </lineage>
</organism>
<proteinExistence type="inferred from homology"/>
<reference key="1">
    <citation type="journal article" date="2005" name="BMC Genomics">
        <title>Bacterial genome adaptation to niches: divergence of the potential virulence genes in three Burkholderia species of different survival strategies.</title>
        <authorList>
            <person name="Kim H.S."/>
            <person name="Schell M.A."/>
            <person name="Yu Y."/>
            <person name="Ulrich R.L."/>
            <person name="Sarria S.H."/>
            <person name="Nierman W.C."/>
            <person name="DeShazer D."/>
        </authorList>
    </citation>
    <scope>NUCLEOTIDE SEQUENCE [LARGE SCALE GENOMIC DNA]</scope>
    <source>
        <strain>ATCC 700388 / DSM 13276 / CCUG 48851 / CIP 106301 / E264</strain>
    </source>
</reference>
<evidence type="ECO:0000255" key="1">
    <source>
        <dbReference type="HAMAP-Rule" id="MF_00033"/>
    </source>
</evidence>
<feature type="chain" id="PRO_1000002628" description="UDP-N-acetylglucosamine--N-acetylmuramyl-(pentapeptide) pyrophosphoryl-undecaprenol N-acetylglucosamine transferase">
    <location>
        <begin position="1"/>
        <end position="367"/>
    </location>
</feature>
<feature type="binding site" evidence="1">
    <location>
        <begin position="15"/>
        <end position="17"/>
    </location>
    <ligand>
        <name>UDP-N-acetyl-alpha-D-glucosamine</name>
        <dbReference type="ChEBI" id="CHEBI:57705"/>
    </ligand>
</feature>
<feature type="binding site" evidence="1">
    <location>
        <position position="127"/>
    </location>
    <ligand>
        <name>UDP-N-acetyl-alpha-D-glucosamine</name>
        <dbReference type="ChEBI" id="CHEBI:57705"/>
    </ligand>
</feature>
<feature type="binding site" evidence="1">
    <location>
        <position position="163"/>
    </location>
    <ligand>
        <name>UDP-N-acetyl-alpha-D-glucosamine</name>
        <dbReference type="ChEBI" id="CHEBI:57705"/>
    </ligand>
</feature>
<feature type="binding site" evidence="1">
    <location>
        <position position="191"/>
    </location>
    <ligand>
        <name>UDP-N-acetyl-alpha-D-glucosamine</name>
        <dbReference type="ChEBI" id="CHEBI:57705"/>
    </ligand>
</feature>
<feature type="binding site" evidence="1">
    <location>
        <position position="249"/>
    </location>
    <ligand>
        <name>UDP-N-acetyl-alpha-D-glucosamine</name>
        <dbReference type="ChEBI" id="CHEBI:57705"/>
    </ligand>
</feature>
<feature type="binding site" evidence="1">
    <location>
        <position position="294"/>
    </location>
    <ligand>
        <name>UDP-N-acetyl-alpha-D-glucosamine</name>
        <dbReference type="ChEBI" id="CHEBI:57705"/>
    </ligand>
</feature>
<keyword id="KW-0131">Cell cycle</keyword>
<keyword id="KW-0132">Cell division</keyword>
<keyword id="KW-0997">Cell inner membrane</keyword>
<keyword id="KW-1003">Cell membrane</keyword>
<keyword id="KW-0133">Cell shape</keyword>
<keyword id="KW-0961">Cell wall biogenesis/degradation</keyword>
<keyword id="KW-0328">Glycosyltransferase</keyword>
<keyword id="KW-0472">Membrane</keyword>
<keyword id="KW-0573">Peptidoglycan synthesis</keyword>
<keyword id="KW-0808">Transferase</keyword>